<proteinExistence type="evidence at protein level"/>
<feature type="chain" id="PRO_0000142464" description="Eukaryotic translation initiation factor 5A-2">
    <location>
        <begin position="1"/>
        <end position="159"/>
    </location>
</feature>
<feature type="region of interest" description="Disordered" evidence="3">
    <location>
        <begin position="1"/>
        <end position="25"/>
    </location>
</feature>
<feature type="compositionally biased region" description="Basic and acidic residues" evidence="3">
    <location>
        <begin position="1"/>
        <end position="10"/>
    </location>
</feature>
<feature type="compositionally biased region" description="Polar residues" evidence="3">
    <location>
        <begin position="13"/>
        <end position="24"/>
    </location>
</feature>
<feature type="modified residue" description="Phosphoserine" evidence="7 10">
    <location>
        <position position="2"/>
    </location>
</feature>
<feature type="modified residue" description="Hypusine" evidence="2">
    <location>
        <position position="51"/>
    </location>
</feature>
<feature type="splice variant" id="VSP_054952" description="In isoform 2." evidence="9">
    <original>MRLGFDEGKDIVVSVMSSMGEEQICAVKEVGGGK</original>
    <variation>LLCFVNADEAWIR</variation>
    <location>
        <begin position="126"/>
        <end position="159"/>
    </location>
</feature>
<feature type="mutagenesis site" description="Loss of phosphorylation." evidence="7">
    <original>S</original>
    <variation>A</variation>
    <location>
        <position position="2"/>
    </location>
</feature>
<feature type="mutagenesis site" description="Loss of activity." evidence="8">
    <original>K</original>
    <variation>S</variation>
    <location>
        <position position="51"/>
    </location>
</feature>
<feature type="strand" evidence="11">
    <location>
        <begin position="18"/>
        <end position="22"/>
    </location>
</feature>
<feature type="helix" evidence="11">
    <location>
        <begin position="23"/>
        <end position="25"/>
    </location>
</feature>
<feature type="strand" evidence="11">
    <location>
        <begin position="30"/>
        <end position="34"/>
    </location>
</feature>
<feature type="strand" evidence="11">
    <location>
        <begin position="37"/>
        <end position="47"/>
    </location>
</feature>
<feature type="strand" evidence="11">
    <location>
        <begin position="56"/>
        <end position="63"/>
    </location>
</feature>
<feature type="turn" evidence="11">
    <location>
        <begin position="64"/>
        <end position="66"/>
    </location>
</feature>
<feature type="strand" evidence="11">
    <location>
        <begin position="69"/>
        <end position="75"/>
    </location>
</feature>
<feature type="strand" evidence="11">
    <location>
        <begin position="78"/>
        <end position="83"/>
    </location>
</feature>
<feature type="strand" evidence="11">
    <location>
        <begin position="86"/>
        <end position="95"/>
    </location>
</feature>
<feature type="strand" evidence="11">
    <location>
        <begin position="99"/>
        <end position="104"/>
    </location>
</feature>
<feature type="helix" evidence="11">
    <location>
        <begin position="120"/>
        <end position="131"/>
    </location>
</feature>
<feature type="strand" evidence="11">
    <location>
        <begin position="134"/>
        <end position="143"/>
    </location>
</feature>
<feature type="strand" evidence="11">
    <location>
        <begin position="146"/>
        <end position="157"/>
    </location>
</feature>
<keyword id="KW-0002">3D-structure</keyword>
<keyword id="KW-0025">Alternative splicing</keyword>
<keyword id="KW-0963">Cytoplasm</keyword>
<keyword id="KW-0385">Hypusine</keyword>
<keyword id="KW-0396">Initiation factor</keyword>
<keyword id="KW-0539">Nucleus</keyword>
<keyword id="KW-0597">Phosphoprotein</keyword>
<keyword id="KW-0648">Protein biosynthesis</keyword>
<keyword id="KW-1185">Reference proteome</keyword>
<protein>
    <recommendedName>
        <fullName>Eukaryotic translation initiation factor 5A-2</fullName>
        <shortName>AtELF5A-2</shortName>
        <shortName>eIF-5A-2</shortName>
    </recommendedName>
    <alternativeName>
        <fullName>Protein FUMONISIN B1-RESISTANT 12</fullName>
    </alternativeName>
</protein>
<gene>
    <name type="primary">ELF5A-2</name>
    <name type="synonym">FBR12</name>
    <name type="ordered locus">At1g26630</name>
    <name type="ORF">T24P13.1</name>
</gene>
<organism>
    <name type="scientific">Arabidopsis thaliana</name>
    <name type="common">Mouse-ear cress</name>
    <dbReference type="NCBI Taxonomy" id="3702"/>
    <lineage>
        <taxon>Eukaryota</taxon>
        <taxon>Viridiplantae</taxon>
        <taxon>Streptophyta</taxon>
        <taxon>Embryophyta</taxon>
        <taxon>Tracheophyta</taxon>
        <taxon>Spermatophyta</taxon>
        <taxon>Magnoliopsida</taxon>
        <taxon>eudicotyledons</taxon>
        <taxon>Gunneridae</taxon>
        <taxon>Pentapetalae</taxon>
        <taxon>rosids</taxon>
        <taxon>malvids</taxon>
        <taxon>Brassicales</taxon>
        <taxon>Brassicaceae</taxon>
        <taxon>Camelineae</taxon>
        <taxon>Arabidopsis</taxon>
    </lineage>
</organism>
<reference key="1">
    <citation type="submission" date="2002-03" db="EMBL/GenBank/DDBJ databases">
        <title>Arabidopsis cDNA clones.</title>
        <authorList>
            <person name="Li C."/>
            <person name="Zhan H."/>
            <person name="Qi Q."/>
            <person name="Li G."/>
            <person name="Ling Q."/>
        </authorList>
    </citation>
    <scope>NUCLEOTIDE SEQUENCE [MRNA]</scope>
</reference>
<reference key="2">
    <citation type="journal article" date="2000" name="Nature">
        <title>Sequence and analysis of chromosome 1 of the plant Arabidopsis thaliana.</title>
        <authorList>
            <person name="Theologis A."/>
            <person name="Ecker J.R."/>
            <person name="Palm C.J."/>
            <person name="Federspiel N.A."/>
            <person name="Kaul S."/>
            <person name="White O."/>
            <person name="Alonso J."/>
            <person name="Altafi H."/>
            <person name="Araujo R."/>
            <person name="Bowman C.L."/>
            <person name="Brooks S.Y."/>
            <person name="Buehler E."/>
            <person name="Chan A."/>
            <person name="Chao Q."/>
            <person name="Chen H."/>
            <person name="Cheuk R.F."/>
            <person name="Chin C.W."/>
            <person name="Chung M.K."/>
            <person name="Conn L."/>
            <person name="Conway A.B."/>
            <person name="Conway A.R."/>
            <person name="Creasy T.H."/>
            <person name="Dewar K."/>
            <person name="Dunn P."/>
            <person name="Etgu P."/>
            <person name="Feldblyum T.V."/>
            <person name="Feng J.-D."/>
            <person name="Fong B."/>
            <person name="Fujii C.Y."/>
            <person name="Gill J.E."/>
            <person name="Goldsmith A.D."/>
            <person name="Haas B."/>
            <person name="Hansen N.F."/>
            <person name="Hughes B."/>
            <person name="Huizar L."/>
            <person name="Hunter J.L."/>
            <person name="Jenkins J."/>
            <person name="Johnson-Hopson C."/>
            <person name="Khan S."/>
            <person name="Khaykin E."/>
            <person name="Kim C.J."/>
            <person name="Koo H.L."/>
            <person name="Kremenetskaia I."/>
            <person name="Kurtz D.B."/>
            <person name="Kwan A."/>
            <person name="Lam B."/>
            <person name="Langin-Hooper S."/>
            <person name="Lee A."/>
            <person name="Lee J.M."/>
            <person name="Lenz C.A."/>
            <person name="Li J.H."/>
            <person name="Li Y.-P."/>
            <person name="Lin X."/>
            <person name="Liu S.X."/>
            <person name="Liu Z.A."/>
            <person name="Luros J.S."/>
            <person name="Maiti R."/>
            <person name="Marziali A."/>
            <person name="Militscher J."/>
            <person name="Miranda M."/>
            <person name="Nguyen M."/>
            <person name="Nierman W.C."/>
            <person name="Osborne B.I."/>
            <person name="Pai G."/>
            <person name="Peterson J."/>
            <person name="Pham P.K."/>
            <person name="Rizzo M."/>
            <person name="Rooney T."/>
            <person name="Rowley D."/>
            <person name="Sakano H."/>
            <person name="Salzberg S.L."/>
            <person name="Schwartz J.R."/>
            <person name="Shinn P."/>
            <person name="Southwick A.M."/>
            <person name="Sun H."/>
            <person name="Tallon L.J."/>
            <person name="Tambunga G."/>
            <person name="Toriumi M.J."/>
            <person name="Town C.D."/>
            <person name="Utterback T."/>
            <person name="Van Aken S."/>
            <person name="Vaysberg M."/>
            <person name="Vysotskaia V.S."/>
            <person name="Walker M."/>
            <person name="Wu D."/>
            <person name="Yu G."/>
            <person name="Fraser C.M."/>
            <person name="Venter J.C."/>
            <person name="Davis R.W."/>
        </authorList>
    </citation>
    <scope>NUCLEOTIDE SEQUENCE [LARGE SCALE GENOMIC DNA]</scope>
    <source>
        <strain>cv. Columbia</strain>
    </source>
</reference>
<reference key="3">
    <citation type="journal article" date="2017" name="Plant J.">
        <title>Araport11: a complete reannotation of the Arabidopsis thaliana reference genome.</title>
        <authorList>
            <person name="Cheng C.Y."/>
            <person name="Krishnakumar V."/>
            <person name="Chan A.P."/>
            <person name="Thibaud-Nissen F."/>
            <person name="Schobel S."/>
            <person name="Town C.D."/>
        </authorList>
    </citation>
    <scope>GENOME REANNOTATION</scope>
    <source>
        <strain>cv. Columbia</strain>
    </source>
</reference>
<reference key="4">
    <citation type="journal article" date="2003" name="Science">
        <title>Empirical analysis of transcriptional activity in the Arabidopsis genome.</title>
        <authorList>
            <person name="Yamada K."/>
            <person name="Lim J."/>
            <person name="Dale J.M."/>
            <person name="Chen H."/>
            <person name="Shinn P."/>
            <person name="Palm C.J."/>
            <person name="Southwick A.M."/>
            <person name="Wu H.C."/>
            <person name="Kim C.J."/>
            <person name="Nguyen M."/>
            <person name="Pham P.K."/>
            <person name="Cheuk R.F."/>
            <person name="Karlin-Newmann G."/>
            <person name="Liu S.X."/>
            <person name="Lam B."/>
            <person name="Sakano H."/>
            <person name="Wu T."/>
            <person name="Yu G."/>
            <person name="Miranda M."/>
            <person name="Quach H.L."/>
            <person name="Tripp M."/>
            <person name="Chang C.H."/>
            <person name="Lee J.M."/>
            <person name="Toriumi M.J."/>
            <person name="Chan M.M."/>
            <person name="Tang C.C."/>
            <person name="Onodera C.S."/>
            <person name="Deng J.M."/>
            <person name="Akiyama K."/>
            <person name="Ansari Y."/>
            <person name="Arakawa T."/>
            <person name="Banh J."/>
            <person name="Banno F."/>
            <person name="Bowser L."/>
            <person name="Brooks S.Y."/>
            <person name="Carninci P."/>
            <person name="Chao Q."/>
            <person name="Choy N."/>
            <person name="Enju A."/>
            <person name="Goldsmith A.D."/>
            <person name="Gurjal M."/>
            <person name="Hansen N.F."/>
            <person name="Hayashizaki Y."/>
            <person name="Johnson-Hopson C."/>
            <person name="Hsuan V.W."/>
            <person name="Iida K."/>
            <person name="Karnes M."/>
            <person name="Khan S."/>
            <person name="Koesema E."/>
            <person name="Ishida J."/>
            <person name="Jiang P.X."/>
            <person name="Jones T."/>
            <person name="Kawai J."/>
            <person name="Kamiya A."/>
            <person name="Meyers C."/>
            <person name="Nakajima M."/>
            <person name="Narusaka M."/>
            <person name="Seki M."/>
            <person name="Sakurai T."/>
            <person name="Satou M."/>
            <person name="Tamse R."/>
            <person name="Vaysberg M."/>
            <person name="Wallender E.K."/>
            <person name="Wong C."/>
            <person name="Yamamura Y."/>
            <person name="Yuan S."/>
            <person name="Shinozaki K."/>
            <person name="Davis R.W."/>
            <person name="Theologis A."/>
            <person name="Ecker J.R."/>
        </authorList>
    </citation>
    <scope>NUCLEOTIDE SEQUENCE [LARGE SCALE MRNA]</scope>
    <source>
        <strain>cv. Columbia</strain>
    </source>
</reference>
<reference key="5">
    <citation type="submission" date="2002-03" db="EMBL/GenBank/DDBJ databases">
        <title>Full-length cDNA from Arabidopsis thaliana.</title>
        <authorList>
            <person name="Brover V.V."/>
            <person name="Troukhan M.E."/>
            <person name="Alexandrov N.A."/>
            <person name="Lu Y.-P."/>
            <person name="Flavell R.B."/>
            <person name="Feldmann K.A."/>
        </authorList>
    </citation>
    <scope>NUCLEOTIDE SEQUENCE [LARGE SCALE MRNA]</scope>
</reference>
<reference key="6">
    <citation type="journal article" date="2007" name="Plant Physiol.">
        <title>Functional characterization of the Arabidopsis eukaryotic translation initiation factor 5A-2 that plays a crucial role in plant growth and development by regulating cell division, cell growth, and cell death.</title>
        <authorList>
            <person name="Feng H."/>
            <person name="Chen Q."/>
            <person name="Feng J."/>
            <person name="Zhang J."/>
            <person name="Yang X."/>
            <person name="Zuo J."/>
        </authorList>
    </citation>
    <scope>FUNCTION</scope>
    <scope>TISSUE SPECIFICITY</scope>
    <scope>DISRUPTION PHENOTYPE</scope>
</reference>
<reference key="7">
    <citation type="journal article" date="2008" name="Plant Physiol.">
        <title>Eukaryotic translation initiation factor 5A is involved in pathogen-induced cell death and development of disease symptoms in Arabidopsis.</title>
        <authorList>
            <person name="Hopkins M.T."/>
            <person name="Lampi Y."/>
            <person name="Wang T.W."/>
            <person name="Liu Z."/>
            <person name="Thompson J.E."/>
        </authorList>
    </citation>
    <scope>FUNCTION</scope>
    <scope>INDUCTION</scope>
</reference>
<reference key="8">
    <citation type="journal article" date="2009" name="Plant Physiol.">
        <title>Large-scale Arabidopsis phosphoproteome profiling reveals novel chloroplast kinase substrates and phosphorylation networks.</title>
        <authorList>
            <person name="Reiland S."/>
            <person name="Messerli G."/>
            <person name="Baerenfaller K."/>
            <person name="Gerrits B."/>
            <person name="Endler A."/>
            <person name="Grossmann J."/>
            <person name="Gruissem W."/>
            <person name="Baginsky S."/>
        </authorList>
    </citation>
    <scope>PHOSPHORYLATION [LARGE SCALE ANALYSIS] AT SER-2</scope>
    <scope>IDENTIFICATION BY MASS SPECTROMETRY [LARGE SCALE ANALYSIS]</scope>
</reference>
<reference key="9">
    <citation type="journal article" date="2010" name="J. Biol. Chem.">
        <title>Phosphorylation of maize eukaryotic translation initiation factor 5A (eIF5A) by casein kinase 2: identification of phosphorylated residue and influence on intracellular localization of eIF5A.</title>
        <authorList>
            <person name="Lebska M."/>
            <person name="Ciesielski A."/>
            <person name="Szymona L."/>
            <person name="Godecka L."/>
            <person name="Lewandowska-Gnatowska E."/>
            <person name="Szczegielniak J."/>
            <person name="Muszynska G."/>
        </authorList>
    </citation>
    <scope>MUTAGENESIS OF SER-2</scope>
    <scope>PHOSPHORYLATION AT SER-2</scope>
    <source>
        <strain>cv. Columbia</strain>
    </source>
</reference>
<reference key="10">
    <citation type="journal article" date="2013" name="Plant Cell">
        <title>The Arabidopsis eukaryotic translation initiation factor eIF5A-2 regulates root protoxylem development by modulating cytokinin signaling.</title>
        <authorList>
            <person name="Ren B."/>
            <person name="Chen Q."/>
            <person name="Hong S."/>
            <person name="Zhao W."/>
            <person name="Feng J."/>
            <person name="Feng H."/>
            <person name="Zuo J."/>
        </authorList>
    </citation>
    <scope>FUNCTION</scope>
    <scope>MUTAGENESIS OF LYS-51</scope>
    <scope>SUBCELLULAR LOCATION</scope>
    <scope>INTERACTION WITH AHK4 AND AHP1</scope>
    <scope>DISRUPTION PHENOTYPE</scope>
    <source>
        <strain>cv. Columbia</strain>
    </source>
</reference>
<reference key="11">
    <citation type="journal article" date="2009" name="Proteins">
        <title>Crystal structure of Arabidopsis translation initiation factor eIF-5A2.</title>
        <authorList>
            <person name="Teng Y.B."/>
            <person name="Ma X.X."/>
            <person name="He Y.X."/>
            <person name="Jiang Y.L."/>
            <person name="Du J."/>
            <person name="Xiang C."/>
            <person name="Chen Y."/>
            <person name="Zhou C.Z."/>
        </authorList>
    </citation>
    <scope>X-RAY CRYSTALLOGRAPHY (2.3 ANGSTROMS)</scope>
    <scope>SUBUNIT</scope>
</reference>
<name>IF5A2_ARATH</name>
<dbReference type="EMBL" id="AF492850">
    <property type="protein sequence ID" value="AAM11676.1"/>
    <property type="molecule type" value="mRNA"/>
</dbReference>
<dbReference type="EMBL" id="AC006535">
    <property type="protein sequence ID" value="AAF87023.1"/>
    <property type="status" value="ALT_SEQ"/>
    <property type="molecule type" value="Genomic_DNA"/>
</dbReference>
<dbReference type="EMBL" id="CP002684">
    <property type="protein sequence ID" value="AEE30711.1"/>
    <property type="molecule type" value="Genomic_DNA"/>
</dbReference>
<dbReference type="EMBL" id="CP002684">
    <property type="protein sequence ID" value="AEE30712.1"/>
    <property type="molecule type" value="Genomic_DNA"/>
</dbReference>
<dbReference type="EMBL" id="AY039588">
    <property type="protein sequence ID" value="AAK62643.1"/>
    <property type="molecule type" value="mRNA"/>
</dbReference>
<dbReference type="EMBL" id="AY055789">
    <property type="protein sequence ID" value="AAL06956.1"/>
    <property type="molecule type" value="mRNA"/>
</dbReference>
<dbReference type="EMBL" id="AY084827">
    <property type="protein sequence ID" value="AAM61392.1"/>
    <property type="molecule type" value="mRNA"/>
</dbReference>
<dbReference type="RefSeq" id="NP_001077597.1">
    <molecule id="Q93VP3-2"/>
    <property type="nucleotide sequence ID" value="NM_001084128.1"/>
</dbReference>
<dbReference type="RefSeq" id="NP_173985.1">
    <molecule id="Q93VP3-1"/>
    <property type="nucleotide sequence ID" value="NM_102425.4"/>
</dbReference>
<dbReference type="PDB" id="3HKS">
    <property type="method" value="X-ray"/>
    <property type="resolution" value="2.30 A"/>
    <property type="chains" value="A/B=1-159"/>
</dbReference>
<dbReference type="PDBsum" id="3HKS"/>
<dbReference type="SMR" id="Q93VP3"/>
<dbReference type="BioGRID" id="24439">
    <property type="interactions" value="9"/>
</dbReference>
<dbReference type="FunCoup" id="Q93VP3">
    <property type="interactions" value="2952"/>
</dbReference>
<dbReference type="IntAct" id="Q93VP3">
    <property type="interactions" value="1"/>
</dbReference>
<dbReference type="STRING" id="3702.Q93VP3"/>
<dbReference type="GlyGen" id="Q93VP3">
    <property type="glycosylation" value="1 site, 1 O-linked glycan (1 site)"/>
</dbReference>
<dbReference type="iPTMnet" id="Q93VP3"/>
<dbReference type="SwissPalm" id="Q93VP3"/>
<dbReference type="PaxDb" id="3702-AT1G26630.1"/>
<dbReference type="ProteomicsDB" id="250680">
    <molecule id="Q93VP3-1"/>
</dbReference>
<dbReference type="EnsemblPlants" id="AT1G26630.1">
    <molecule id="Q93VP3-1"/>
    <property type="protein sequence ID" value="AT1G26630.1"/>
    <property type="gene ID" value="AT1G26630"/>
</dbReference>
<dbReference type="EnsemblPlants" id="AT1G26630.2">
    <molecule id="Q93VP3-2"/>
    <property type="protein sequence ID" value="AT1G26630.2"/>
    <property type="gene ID" value="AT1G26630"/>
</dbReference>
<dbReference type="GeneID" id="839203"/>
<dbReference type="Gramene" id="AT1G26630.1">
    <molecule id="Q93VP3-1"/>
    <property type="protein sequence ID" value="AT1G26630.1"/>
    <property type="gene ID" value="AT1G26630"/>
</dbReference>
<dbReference type="Gramene" id="AT1G26630.2">
    <molecule id="Q93VP3-2"/>
    <property type="protein sequence ID" value="AT1G26630.2"/>
    <property type="gene ID" value="AT1G26630"/>
</dbReference>
<dbReference type="KEGG" id="ath:AT1G26630"/>
<dbReference type="Araport" id="AT1G26630"/>
<dbReference type="TAIR" id="AT1G26630">
    <property type="gene designation" value="FBR12"/>
</dbReference>
<dbReference type="eggNOG" id="KOG3271">
    <property type="taxonomic scope" value="Eukaryota"/>
</dbReference>
<dbReference type="HOGENOM" id="CLU_102600_1_0_1"/>
<dbReference type="InParanoid" id="Q93VP3"/>
<dbReference type="OMA" id="IVKMSTS"/>
<dbReference type="OrthoDB" id="1050333at2759"/>
<dbReference type="PhylomeDB" id="Q93VP3"/>
<dbReference type="CD-CODE" id="4299E36E">
    <property type="entry name" value="Nucleolus"/>
</dbReference>
<dbReference type="EvolutionaryTrace" id="Q93VP3"/>
<dbReference type="PRO" id="PR:Q93VP3"/>
<dbReference type="Proteomes" id="UP000006548">
    <property type="component" value="Chromosome 1"/>
</dbReference>
<dbReference type="ExpressionAtlas" id="Q93VP3">
    <property type="expression patterns" value="baseline and differential"/>
</dbReference>
<dbReference type="GO" id="GO:0005829">
    <property type="term" value="C:cytosol"/>
    <property type="evidence" value="ECO:0007005"/>
    <property type="project" value="TAIR"/>
</dbReference>
<dbReference type="GO" id="GO:0005634">
    <property type="term" value="C:nucleus"/>
    <property type="evidence" value="ECO:0000314"/>
    <property type="project" value="TAIR"/>
</dbReference>
<dbReference type="GO" id="GO:0003729">
    <property type="term" value="F:mRNA binding"/>
    <property type="evidence" value="ECO:0000314"/>
    <property type="project" value="TAIR"/>
</dbReference>
<dbReference type="GO" id="GO:0043022">
    <property type="term" value="F:ribosome binding"/>
    <property type="evidence" value="ECO:0007669"/>
    <property type="project" value="InterPro"/>
</dbReference>
<dbReference type="GO" id="GO:0003746">
    <property type="term" value="F:translation elongation factor activity"/>
    <property type="evidence" value="ECO:0007669"/>
    <property type="project" value="InterPro"/>
</dbReference>
<dbReference type="GO" id="GO:0003743">
    <property type="term" value="F:translation initiation factor activity"/>
    <property type="evidence" value="ECO:0000315"/>
    <property type="project" value="TAIR"/>
</dbReference>
<dbReference type="GO" id="GO:0042742">
    <property type="term" value="P:defense response to bacterium"/>
    <property type="evidence" value="ECO:0000315"/>
    <property type="project" value="TAIR"/>
</dbReference>
<dbReference type="GO" id="GO:0045901">
    <property type="term" value="P:positive regulation of translational elongation"/>
    <property type="evidence" value="ECO:0007669"/>
    <property type="project" value="InterPro"/>
</dbReference>
<dbReference type="GO" id="GO:0045905">
    <property type="term" value="P:positive regulation of translational termination"/>
    <property type="evidence" value="ECO:0007669"/>
    <property type="project" value="InterPro"/>
</dbReference>
<dbReference type="GO" id="GO:0012501">
    <property type="term" value="P:programmed cell death"/>
    <property type="evidence" value="ECO:0000315"/>
    <property type="project" value="TAIR"/>
</dbReference>
<dbReference type="GO" id="GO:0009617">
    <property type="term" value="P:response to bacterium"/>
    <property type="evidence" value="ECO:0000270"/>
    <property type="project" value="TAIR"/>
</dbReference>
<dbReference type="GO" id="GO:0009611">
    <property type="term" value="P:response to wounding"/>
    <property type="evidence" value="ECO:0000270"/>
    <property type="project" value="TAIR"/>
</dbReference>
<dbReference type="GO" id="GO:0034050">
    <property type="term" value="P:symbiont-induced defense-related programmed cell death"/>
    <property type="evidence" value="ECO:0000314"/>
    <property type="project" value="TAIR"/>
</dbReference>
<dbReference type="GO" id="GO:0006413">
    <property type="term" value="P:translational initiation"/>
    <property type="evidence" value="ECO:0000315"/>
    <property type="project" value="TAIR"/>
</dbReference>
<dbReference type="CDD" id="cd04468">
    <property type="entry name" value="S1_eIF5A"/>
    <property type="match status" value="1"/>
</dbReference>
<dbReference type="FunFam" id="2.30.30.30:FF:000012">
    <property type="entry name" value="Eukaryotic translation initiation factor 5A"/>
    <property type="match status" value="1"/>
</dbReference>
<dbReference type="FunFam" id="2.40.50.140:FF:000034">
    <property type="entry name" value="Eukaryotic translation initiation factor 5A"/>
    <property type="match status" value="1"/>
</dbReference>
<dbReference type="Gene3D" id="2.30.30.30">
    <property type="match status" value="1"/>
</dbReference>
<dbReference type="Gene3D" id="2.40.50.140">
    <property type="entry name" value="Nucleic acid-binding proteins"/>
    <property type="match status" value="1"/>
</dbReference>
<dbReference type="InterPro" id="IPR001884">
    <property type="entry name" value="IF5A-like"/>
</dbReference>
<dbReference type="InterPro" id="IPR048670">
    <property type="entry name" value="IF5A-like_N"/>
</dbReference>
<dbReference type="InterPro" id="IPR012340">
    <property type="entry name" value="NA-bd_OB-fold"/>
</dbReference>
<dbReference type="InterPro" id="IPR014722">
    <property type="entry name" value="Rib_uL2_dom2"/>
</dbReference>
<dbReference type="InterPro" id="IPR019769">
    <property type="entry name" value="Trans_elong_IF5A_hypusine_site"/>
</dbReference>
<dbReference type="InterPro" id="IPR020189">
    <property type="entry name" value="Transl_elong_IF5A_C"/>
</dbReference>
<dbReference type="InterPro" id="IPR008991">
    <property type="entry name" value="Translation_prot_SH3-like_sf"/>
</dbReference>
<dbReference type="NCBIfam" id="TIGR00037">
    <property type="entry name" value="eIF_5A"/>
    <property type="match status" value="1"/>
</dbReference>
<dbReference type="PANTHER" id="PTHR11673">
    <property type="entry name" value="TRANSLATION INITIATION FACTOR 5A FAMILY MEMBER"/>
    <property type="match status" value="1"/>
</dbReference>
<dbReference type="Pfam" id="PF01287">
    <property type="entry name" value="eIF-5a"/>
    <property type="match status" value="1"/>
</dbReference>
<dbReference type="Pfam" id="PF21485">
    <property type="entry name" value="IF5A-like_N"/>
    <property type="match status" value="1"/>
</dbReference>
<dbReference type="PIRSF" id="PIRSF003025">
    <property type="entry name" value="eIF5A"/>
    <property type="match status" value="1"/>
</dbReference>
<dbReference type="SMART" id="SM01376">
    <property type="entry name" value="eIF-5a"/>
    <property type="match status" value="1"/>
</dbReference>
<dbReference type="SUPFAM" id="SSF50249">
    <property type="entry name" value="Nucleic acid-binding proteins"/>
    <property type="match status" value="1"/>
</dbReference>
<dbReference type="SUPFAM" id="SSF50104">
    <property type="entry name" value="Translation proteins SH3-like domain"/>
    <property type="match status" value="1"/>
</dbReference>
<dbReference type="PROSITE" id="PS00302">
    <property type="entry name" value="IF5A_HYPUSINE"/>
    <property type="match status" value="1"/>
</dbReference>
<comment type="function">
    <text evidence="1 4 5 8">Translation factor that promotes translation elongation and termination, particularly upon ribosome stalling at specific amino acid sequence contexts (By similarity). Binds between the exit (E) and peptidyl (P) site of the ribosome and promotes rescue of stalled ribosome: specifically required for efficient translation of polyproline-containing peptides as well as other motifs that stall the ribosome (By similarity). Acts as a ribosome quality control (RQC) cofactor by joining the RQC complex to facilitate peptidyl transfer during CAT tailing step (By similarity). Regulates cytokinin-mediated root protoxylem specification and represses secifically the expression of AHP6 (PubMed:24163315). Regulates the induction of programmed cell death caused by infection with virulent pathogen (PubMed:17513484, PubMed:18633122).</text>
</comment>
<comment type="subunit">
    <text evidence="6 8">Homodimer. Interacts with AHK4 and AHP1. Cytokinin regulates the formation of the AHP1-AHK4-ELF5A-2 complex.</text>
</comment>
<comment type="subcellular location">
    <subcellularLocation>
        <location evidence="8">Cytoplasm</location>
    </subcellularLocation>
    <subcellularLocation>
        <location evidence="8">Nucleus</location>
    </subcellularLocation>
</comment>
<comment type="alternative products">
    <event type="alternative splicing"/>
    <isoform>
        <id>Q93VP3-1</id>
        <name>1</name>
        <sequence type="displayed"/>
    </isoform>
    <isoform>
        <id>Q93VP3-2</id>
        <name>2</name>
        <sequence type="described" ref="VSP_054952"/>
    </isoform>
</comment>
<comment type="tissue specificity">
    <text evidence="4">Ubiquitous. In roots, expressed mostly inside the stele of the mature zone.</text>
</comment>
<comment type="induction">
    <text evidence="5">Constitutively expressed. Up-regulated at post-transcriptional level by wounding and pathogen infection.</text>
</comment>
<comment type="PTM">
    <text evidence="2">Lys-51 undergoes hypusination, a unique post-translational modification that consists in the addition of a butylamino group from spermidine to lysine side chain, leading to the formation of the unusual amino acid hypusine. eIF-5As are the only known proteins to undergo this modification, which is essential for their function.</text>
</comment>
<comment type="disruption phenotype">
    <text evidence="4 8">Severe defects in plant growth and development. Delayed dark-induced leaf senescence. Dwarfism, defective sporogenesis and shorter primary roots. Impaired protoxylem development.</text>
</comment>
<comment type="similarity">
    <text evidence="9">Belongs to the eIF-5A family.</text>
</comment>
<comment type="sequence caution" evidence="9">
    <conflict type="erroneous gene model prediction">
        <sequence resource="EMBL-CDS" id="AAF87023"/>
    </conflict>
</comment>
<sequence>MSDDEHHFEASESGASKTYPQSAGNIRKGGHIVIKNRPCKVVEVSTSKTGKHGHAKCHFVAIDIFTAKKLEDIVPSSHNCDVPHVNRVDYQLIDITEDGFVSLLTDSGGTKDDLKLPTDDGLTAQMRLGFDEGKDIVVSVMSSMGEEQICAVKEVGGGK</sequence>
<evidence type="ECO:0000250" key="1">
    <source>
        <dbReference type="UniProtKB" id="P23301"/>
    </source>
</evidence>
<evidence type="ECO:0000250" key="2">
    <source>
        <dbReference type="UniProtKB" id="Q9XI91"/>
    </source>
</evidence>
<evidence type="ECO:0000256" key="3">
    <source>
        <dbReference type="SAM" id="MobiDB-lite"/>
    </source>
</evidence>
<evidence type="ECO:0000269" key="4">
    <source>
    </source>
</evidence>
<evidence type="ECO:0000269" key="5">
    <source>
    </source>
</evidence>
<evidence type="ECO:0000269" key="6">
    <source>
    </source>
</evidence>
<evidence type="ECO:0000269" key="7">
    <source>
    </source>
</evidence>
<evidence type="ECO:0000269" key="8">
    <source>
    </source>
</evidence>
<evidence type="ECO:0000305" key="9"/>
<evidence type="ECO:0007744" key="10">
    <source>
    </source>
</evidence>
<evidence type="ECO:0007829" key="11">
    <source>
        <dbReference type="PDB" id="3HKS"/>
    </source>
</evidence>
<accession>Q93VP3</accession>
<accession>F4HPA2</accession>
<accession>Q547G3</accession>
<accession>Q9LQY9</accession>